<organism>
    <name type="scientific">Escherichia coli O9:H4 (strain HS)</name>
    <dbReference type="NCBI Taxonomy" id="331112"/>
    <lineage>
        <taxon>Bacteria</taxon>
        <taxon>Pseudomonadati</taxon>
        <taxon>Pseudomonadota</taxon>
        <taxon>Gammaproteobacteria</taxon>
        <taxon>Enterobacterales</taxon>
        <taxon>Enterobacteriaceae</taxon>
        <taxon>Escherichia</taxon>
    </lineage>
</organism>
<proteinExistence type="inferred from homology"/>
<gene>
    <name evidence="1" type="primary">rplL</name>
    <name type="ordered locus">EcHS_A4219</name>
</gene>
<evidence type="ECO:0000255" key="1">
    <source>
        <dbReference type="HAMAP-Rule" id="MF_00368"/>
    </source>
</evidence>
<evidence type="ECO:0000305" key="2"/>
<accession>A8A785</accession>
<feature type="chain" id="PRO_1000059924" description="Large ribosomal subunit protein bL12">
    <location>
        <begin position="1"/>
        <end position="121"/>
    </location>
</feature>
<comment type="function">
    <text evidence="1">Forms part of the ribosomal stalk which helps the ribosome interact with GTP-bound translation factors. Is thus essential for accurate translation.</text>
</comment>
<comment type="subunit">
    <text evidence="1">Homodimer. Part of the ribosomal stalk of the 50S ribosomal subunit. Forms a multimeric L10(L12)X complex, where L10 forms an elongated spine to which 2 to 4 L12 dimers bind in a sequential fashion. Binds GTP-bound translation factors.</text>
</comment>
<comment type="similarity">
    <text evidence="1">Belongs to the bacterial ribosomal protein bL12 family.</text>
</comment>
<protein>
    <recommendedName>
        <fullName evidence="1">Large ribosomal subunit protein bL12</fullName>
    </recommendedName>
    <alternativeName>
        <fullName evidence="2">50S ribosomal protein L7/L12</fullName>
    </alternativeName>
</protein>
<dbReference type="EMBL" id="CP000802">
    <property type="protein sequence ID" value="ABV08389.1"/>
    <property type="molecule type" value="Genomic_DNA"/>
</dbReference>
<dbReference type="RefSeq" id="WP_000028878.1">
    <property type="nucleotide sequence ID" value="NC_009800.1"/>
</dbReference>
<dbReference type="BMRB" id="A8A785"/>
<dbReference type="SMR" id="A8A785"/>
<dbReference type="GeneID" id="86944525"/>
<dbReference type="KEGG" id="ecx:EcHS_A4219"/>
<dbReference type="HOGENOM" id="CLU_086499_3_2_6"/>
<dbReference type="GO" id="GO:0022625">
    <property type="term" value="C:cytosolic large ribosomal subunit"/>
    <property type="evidence" value="ECO:0007669"/>
    <property type="project" value="TreeGrafter"/>
</dbReference>
<dbReference type="GO" id="GO:0003729">
    <property type="term" value="F:mRNA binding"/>
    <property type="evidence" value="ECO:0007669"/>
    <property type="project" value="TreeGrafter"/>
</dbReference>
<dbReference type="GO" id="GO:0003735">
    <property type="term" value="F:structural constituent of ribosome"/>
    <property type="evidence" value="ECO:0007669"/>
    <property type="project" value="InterPro"/>
</dbReference>
<dbReference type="GO" id="GO:0006412">
    <property type="term" value="P:translation"/>
    <property type="evidence" value="ECO:0007669"/>
    <property type="project" value="UniProtKB-UniRule"/>
</dbReference>
<dbReference type="CDD" id="cd00387">
    <property type="entry name" value="Ribosomal_L7_L12"/>
    <property type="match status" value="1"/>
</dbReference>
<dbReference type="FunFam" id="1.20.5.710:FF:000001">
    <property type="entry name" value="50S ribosomal protein L7/L12"/>
    <property type="match status" value="1"/>
</dbReference>
<dbReference type="FunFam" id="3.30.1390.10:FF:000001">
    <property type="entry name" value="50S ribosomal protein L7/L12"/>
    <property type="match status" value="1"/>
</dbReference>
<dbReference type="Gene3D" id="3.30.1390.10">
    <property type="match status" value="1"/>
</dbReference>
<dbReference type="Gene3D" id="1.20.5.710">
    <property type="entry name" value="Single helix bin"/>
    <property type="match status" value="1"/>
</dbReference>
<dbReference type="HAMAP" id="MF_00368">
    <property type="entry name" value="Ribosomal_bL12"/>
    <property type="match status" value="1"/>
</dbReference>
<dbReference type="InterPro" id="IPR000206">
    <property type="entry name" value="Ribosomal_bL12"/>
</dbReference>
<dbReference type="InterPro" id="IPR013823">
    <property type="entry name" value="Ribosomal_bL12_C"/>
</dbReference>
<dbReference type="InterPro" id="IPR014719">
    <property type="entry name" value="Ribosomal_bL12_C/ClpS-like"/>
</dbReference>
<dbReference type="InterPro" id="IPR008932">
    <property type="entry name" value="Ribosomal_bL12_oligo"/>
</dbReference>
<dbReference type="InterPro" id="IPR036235">
    <property type="entry name" value="Ribosomal_bL12_oligo_N_sf"/>
</dbReference>
<dbReference type="NCBIfam" id="TIGR00855">
    <property type="entry name" value="L12"/>
    <property type="match status" value="1"/>
</dbReference>
<dbReference type="PANTHER" id="PTHR45987">
    <property type="entry name" value="39S RIBOSOMAL PROTEIN L12"/>
    <property type="match status" value="1"/>
</dbReference>
<dbReference type="PANTHER" id="PTHR45987:SF4">
    <property type="entry name" value="LARGE RIBOSOMAL SUBUNIT PROTEIN BL12M"/>
    <property type="match status" value="1"/>
</dbReference>
<dbReference type="Pfam" id="PF00542">
    <property type="entry name" value="Ribosomal_L12"/>
    <property type="match status" value="1"/>
</dbReference>
<dbReference type="Pfam" id="PF16320">
    <property type="entry name" value="Ribosomal_L12_N"/>
    <property type="match status" value="1"/>
</dbReference>
<dbReference type="SUPFAM" id="SSF54736">
    <property type="entry name" value="ClpS-like"/>
    <property type="match status" value="1"/>
</dbReference>
<dbReference type="SUPFAM" id="SSF48300">
    <property type="entry name" value="Ribosomal protein L7/12, oligomerisation (N-terminal) domain"/>
    <property type="match status" value="1"/>
</dbReference>
<keyword id="KW-0687">Ribonucleoprotein</keyword>
<keyword id="KW-0689">Ribosomal protein</keyword>
<name>RL7_ECOHS</name>
<sequence length="121" mass="12295">MSITKDQIIEAVAAMSVMDVVELISAMEEKFGVSAAAAVAVAAGPVEAAEEKTEFDVILKAAGANKVAVIKAVRGATGLGLKEAKDLVESAPAALKEGVSKDDAEALKKALEEAGAEVEVK</sequence>
<reference key="1">
    <citation type="journal article" date="2008" name="J. Bacteriol.">
        <title>The pangenome structure of Escherichia coli: comparative genomic analysis of E. coli commensal and pathogenic isolates.</title>
        <authorList>
            <person name="Rasko D.A."/>
            <person name="Rosovitz M.J."/>
            <person name="Myers G.S.A."/>
            <person name="Mongodin E.F."/>
            <person name="Fricke W.F."/>
            <person name="Gajer P."/>
            <person name="Crabtree J."/>
            <person name="Sebaihia M."/>
            <person name="Thomson N.R."/>
            <person name="Chaudhuri R."/>
            <person name="Henderson I.R."/>
            <person name="Sperandio V."/>
            <person name="Ravel J."/>
        </authorList>
    </citation>
    <scope>NUCLEOTIDE SEQUENCE [LARGE SCALE GENOMIC DNA]</scope>
    <source>
        <strain>HS</strain>
    </source>
</reference>